<name>VF179_IIV3</name>
<proteinExistence type="predicted"/>
<dbReference type="EMBL" id="DQ643392">
    <property type="protein sequence ID" value="ABF82065.1"/>
    <property type="molecule type" value="Genomic_DNA"/>
</dbReference>
<dbReference type="RefSeq" id="YP_654607.1">
    <property type="nucleotide sequence ID" value="NC_008187.1"/>
</dbReference>
<dbReference type="SMR" id="Q197C5"/>
<dbReference type="KEGG" id="vg:4156345"/>
<dbReference type="OrthoDB" id="970at10239"/>
<dbReference type="Proteomes" id="UP000001358">
    <property type="component" value="Genome"/>
</dbReference>
<dbReference type="InterPro" id="IPR006598">
    <property type="entry name" value="CAP10"/>
</dbReference>
<dbReference type="InterPro" id="IPR011009">
    <property type="entry name" value="Kinase-like_dom_sf"/>
</dbReference>
<dbReference type="InterPro" id="IPR051091">
    <property type="entry name" value="O-Glucosyltr/Glycosyltrsf_90"/>
</dbReference>
<dbReference type="PANTHER" id="PTHR12203:SF119">
    <property type="entry name" value="GLYCOSYL TRANSFERASE CAP10 DOMAIN-CONTAINING PROTEIN"/>
    <property type="match status" value="1"/>
</dbReference>
<dbReference type="PANTHER" id="PTHR12203">
    <property type="entry name" value="KDEL LYS-ASP-GLU-LEU CONTAINING - RELATED"/>
    <property type="match status" value="1"/>
</dbReference>
<dbReference type="Pfam" id="PF05686">
    <property type="entry name" value="Glyco_transf_90"/>
    <property type="match status" value="1"/>
</dbReference>
<dbReference type="SMART" id="SM00672">
    <property type="entry name" value="CAP10"/>
    <property type="match status" value="1"/>
</dbReference>
<dbReference type="SUPFAM" id="SSF56112">
    <property type="entry name" value="Protein kinase-like (PK-like)"/>
    <property type="match status" value="1"/>
</dbReference>
<gene>
    <name type="ORF">IIV3-035R</name>
</gene>
<keyword id="KW-1185">Reference proteome</keyword>
<organism>
    <name type="scientific">Invertebrate iridescent virus 3</name>
    <name type="common">IIV-3</name>
    <name type="synonym">Mosquito iridescent virus</name>
    <dbReference type="NCBI Taxonomy" id="345201"/>
    <lineage>
        <taxon>Viruses</taxon>
        <taxon>Varidnaviria</taxon>
        <taxon>Bamfordvirae</taxon>
        <taxon>Nucleocytoviricota</taxon>
        <taxon>Megaviricetes</taxon>
        <taxon>Pimascovirales</taxon>
        <taxon>Iridoviridae</taxon>
        <taxon>Betairidovirinae</taxon>
        <taxon>Chloriridovirus</taxon>
    </lineage>
</organism>
<feature type="chain" id="PRO_0000377762" description="Uncharacterized protein 035R">
    <location>
        <begin position="1"/>
        <end position="1098"/>
    </location>
</feature>
<reference key="1">
    <citation type="journal article" date="2006" name="J. Virol.">
        <title>Genome of invertebrate iridescent virus type 3 (mosquito iridescent virus).</title>
        <authorList>
            <person name="Delhon G."/>
            <person name="Tulman E.R."/>
            <person name="Afonso C.L."/>
            <person name="Lu Z."/>
            <person name="Becnel J.J."/>
            <person name="Moser B.A."/>
            <person name="Kutish G.F."/>
            <person name="Rock D.L."/>
        </authorList>
    </citation>
    <scope>NUCLEOTIDE SEQUENCE [LARGE SCALE GENOMIC DNA]</scope>
</reference>
<sequence>MQLNYDYFTKPECKILLPKVQTNPRYKNFTQLYYTVGDEEQFWVETTLKPFLEKDGDASPQSQQRVASQENVWRNLETFVPWQGYENISAAEVEPTFQYMFNRFKKGIYVSIAGGRLQSFVPFSKANFTNDWADRIQIDPKYGSFLNFLKAQHDLNNKWNGTTYKWNPNKVCPDPRYWYANNCIVRYENPISESHSNVAQIKSMLLELVEKRHISDVKFFINRRDFPLLTRDGTEAYDNIFGDETPVPEQYRHRKWLPILSMCTSERFADIAIPTHEDWSRVKSDEGIYFPPVCRNYTFQFVHTWSDKVAKAVFRGSNTGCGWNETNNVRLKLARLGTVRPDLLDAGITNWNLRVRVSKHSPYLQIPDPGTLTAVDRLSPHQQSQYKFIVHVEGHVSAFRLSLELGMKSCILLVQSLHGWKMWYSDLLKPWVHYVPVRPDLSDLFDRIEWCRANDAQCRAMAENAYQFYRTHLDKESILDHLQHTLNRLARQFTAQEPPTDPLLLQMEWERQALAQLAPQKTSALTGQFPPSPFRNWGSLCGFEKFVTQALDPRMEMGSVAVPGKTIFKSKTTKVTLYQLGGTWFVAKRTINLMKKLEFLHEGFIGKMVLNNLVKWCPNYLYTFHYRDEPFISYTWKDYNSLEGGSRVFNPTVKESTVMQEFIDGPTLQAFLQTCTFKSYFEVLFSLCCALLLGQSLCGFVHHDLKPWNVVVQVLPEPTVVEYTVRPDPNSGEKFLTWKIKTRYIPVMIDYGKSHVVYRNVHYGVADQFATNWSLDLQTLLVSTLNEWMLRYHQSEGKENPSPDYGDLVYTANFLSTRPLKTVRDLAGWTLANKKFQTQAPLDFKIFPSNAPVIEDFLKHMAPLTKKYKISFGKGAATAAGWSFNPRQIVDLAFSLDPDQQANAWVQVPRRIYRNPLPAATNKLVATFIAQQLWNGLVVPKLGFVDWAQSENLNRSVAESIWNEYDKMEKFLTQHYWSKIDKMTPAPLTIEPYPDAFQTLVQLRLKPTRSLFLSSDKLQRLRRNIAPQYDAPAFPDYDQYRGMILDMVKDSGPFKLTPDLAAFYLDNLKPLFDEKIMEAVTNLETIKFYTQPTTKSKF</sequence>
<accession>Q197C5</accession>
<organismHost>
    <name type="scientific">Aedes vexans</name>
    <name type="common">Inland floodwater mosquito</name>
    <name type="synonym">Culex vexans</name>
    <dbReference type="NCBI Taxonomy" id="7163"/>
</organismHost>
<organismHost>
    <name type="scientific">Culex territans</name>
    <dbReference type="NCBI Taxonomy" id="42431"/>
</organismHost>
<organismHost>
    <name type="scientific">Culiseta annulata</name>
    <dbReference type="NCBI Taxonomy" id="332058"/>
</organismHost>
<organismHost>
    <name type="scientific">Ochlerotatus sollicitans</name>
    <name type="common">eastern saltmarsh mosquito</name>
    <dbReference type="NCBI Taxonomy" id="310513"/>
</organismHost>
<organismHost>
    <name type="scientific">Ochlerotatus taeniorhynchus</name>
    <name type="common">Black salt marsh mosquito</name>
    <name type="synonym">Aedes taeniorhynchus</name>
    <dbReference type="NCBI Taxonomy" id="329105"/>
</organismHost>
<organismHost>
    <name type="scientific">Psorophora ferox</name>
    <dbReference type="NCBI Taxonomy" id="7183"/>
</organismHost>
<protein>
    <recommendedName>
        <fullName>Uncharacterized protein 035R</fullName>
    </recommendedName>
</protein>